<evidence type="ECO:0000255" key="1"/>
<evidence type="ECO:0000305" key="2"/>
<geneLocation type="plasmid">
    <name>pMOL30</name>
</geneLocation>
<comment type="function">
    <text>Component of the CZC cation-efflux system that confers resistance to cobalt, zinc and cadmium.</text>
</comment>
<comment type="subcellular location">
    <subcellularLocation>
        <location evidence="2">Cell inner membrane</location>
        <topology evidence="2">Multi-pass membrane protein</topology>
    </subcellularLocation>
</comment>
<comment type="similarity">
    <text evidence="2">To A.xylosoxydans NccN.</text>
</comment>
<comment type="sequence caution" evidence="2">
    <conflict type="erroneous initiation">
        <sequence resource="EMBL-CDS" id="ABF12843"/>
    </conflict>
</comment>
<reference key="1">
    <citation type="journal article" date="1992" name="J. Bacteriol.">
        <title>CzcR and CzcD, gene products affecting regulation of resistance to cobalt, zinc, and cadmium (czc system) in Alcaligenes eutrophus.</title>
        <authorList>
            <person name="Nies D.H."/>
        </authorList>
    </citation>
    <scope>NUCLEOTIDE SEQUENCE [GENOMIC DNA]</scope>
</reference>
<reference key="2">
    <citation type="journal article" date="2010" name="PLoS ONE">
        <title>The complete genome sequence of Cupriavidus metallidurans strain CH34, a master survivalist in harsh and anthropogenic environments.</title>
        <authorList>
            <person name="Janssen P.J."/>
            <person name="Van Houdt R."/>
            <person name="Moors H."/>
            <person name="Monsieurs P."/>
            <person name="Morin N."/>
            <person name="Michaux A."/>
            <person name="Benotmane M.A."/>
            <person name="Leys N."/>
            <person name="Vallaeys T."/>
            <person name="Lapidus A."/>
            <person name="Monchy S."/>
            <person name="Medigue C."/>
            <person name="Taghavi S."/>
            <person name="McCorkle S."/>
            <person name="Dunn J."/>
            <person name="van der Lelie D."/>
            <person name="Mergeay M."/>
        </authorList>
    </citation>
    <scope>NUCLEOTIDE SEQUENCE [LARGE SCALE GENOMIC DNA]</scope>
    <source>
        <strain>ATCC 43123 / DSM 2839 / NBRC 102507 / CH34</strain>
    </source>
</reference>
<reference key="3">
    <citation type="journal article" date="1997" name="Mol. Microbiol.">
        <title>Two-component regulatory system involved in transcriptional control of heavy-metal homoeostasis in Alcaligenes eutrophus.</title>
        <authorList>
            <person name="van der Lelie D."/>
            <person name="Schwuchow T."/>
            <person name="Schwidetzky T."/>
            <person name="Wuertz S."/>
            <person name="Baeyens W."/>
            <person name="Mergeay M."/>
            <person name="Nies D.H."/>
        </authorList>
    </citation>
    <scope>NUCLEOTIDE SEQUENCE [GENOMIC DNA] OF 50-216</scope>
</reference>
<reference key="4">
    <citation type="journal article" date="1995" name="J. Ind. Microbiol.">
        <title>The czc operon of Alcaligenes eutrophus CH34: from resistance mechanism to the removal of heavy metals.</title>
        <authorList>
            <person name="Diels L."/>
            <person name="Dong Q."/>
            <person name="van der Lelie D."/>
            <person name="Baeyens W."/>
            <person name="Mergeay M."/>
        </authorList>
    </citation>
    <scope>NUCLEOTIDE SEQUENCE [GENOMIC DNA] OF 171-216</scope>
    <scope>IDENTIFICATION</scope>
    <scope>DISCUSSION OF FUNCTION</scope>
</reference>
<accession>P94139</accession>
<accession>Q1LAI3</accession>
<accession>Q44008</accession>
<dbReference type="EMBL" id="X71400">
    <property type="protein sequence ID" value="CAA50523.2"/>
    <property type="molecule type" value="Genomic_DNA"/>
</dbReference>
<dbReference type="EMBL" id="CP000354">
    <property type="protein sequence ID" value="ABF12843.1"/>
    <property type="status" value="ALT_INIT"/>
    <property type="molecule type" value="Genomic_DNA"/>
</dbReference>
<dbReference type="EMBL" id="X98451">
    <property type="protein sequence ID" value="CAA67079.1"/>
    <property type="molecule type" value="Genomic_DNA"/>
</dbReference>
<dbReference type="RefSeq" id="WP_011229344.1">
    <property type="nucleotide sequence ID" value="NC_007971.2"/>
</dbReference>
<dbReference type="RefSeq" id="YP_145591.1">
    <property type="nucleotide sequence ID" value="NC_006466.1"/>
</dbReference>
<dbReference type="SMR" id="P94139"/>
<dbReference type="GeneID" id="92822861"/>
<dbReference type="KEGG" id="rme:Rmet_5984"/>
<dbReference type="HOGENOM" id="CLU_1018913_0_0_4"/>
<dbReference type="Proteomes" id="UP000002429">
    <property type="component" value="Plasmid pMOL30"/>
</dbReference>
<dbReference type="GO" id="GO:0005886">
    <property type="term" value="C:plasma membrane"/>
    <property type="evidence" value="ECO:0007669"/>
    <property type="project" value="UniProtKB-SubCell"/>
</dbReference>
<dbReference type="GO" id="GO:0016740">
    <property type="term" value="F:transferase activity"/>
    <property type="evidence" value="ECO:0007669"/>
    <property type="project" value="UniProtKB-ARBA"/>
</dbReference>
<dbReference type="GO" id="GO:0046686">
    <property type="term" value="P:response to cadmium ion"/>
    <property type="evidence" value="ECO:0007669"/>
    <property type="project" value="UniProtKB-KW"/>
</dbReference>
<dbReference type="Gene3D" id="1.20.120.1630">
    <property type="match status" value="1"/>
</dbReference>
<dbReference type="InterPro" id="IPR007318">
    <property type="entry name" value="Phopholipid_MeTrfase"/>
</dbReference>
<dbReference type="PANTHER" id="PTHR12714">
    <property type="entry name" value="PROTEIN-S ISOPRENYLCYSTEINE O-METHYLTRANSFERASE"/>
    <property type="match status" value="1"/>
</dbReference>
<dbReference type="PANTHER" id="PTHR12714:SF9">
    <property type="entry name" value="PROTEIN-S-ISOPRENYLCYSTEINE O-METHYLTRANSFERASE"/>
    <property type="match status" value="1"/>
</dbReference>
<dbReference type="Pfam" id="PF04191">
    <property type="entry name" value="PEMT"/>
    <property type="match status" value="1"/>
</dbReference>
<keyword id="KW-0105">Cadmium resistance</keyword>
<keyword id="KW-0997">Cell inner membrane</keyword>
<keyword id="KW-1003">Cell membrane</keyword>
<keyword id="KW-0170">Cobalt</keyword>
<keyword id="KW-0472">Membrane</keyword>
<keyword id="KW-0614">Plasmid</keyword>
<keyword id="KW-1185">Reference proteome</keyword>
<keyword id="KW-0812">Transmembrane</keyword>
<keyword id="KW-1133">Transmembrane helix</keyword>
<keyword id="KW-0813">Transport</keyword>
<keyword id="KW-0862">Zinc</keyword>
<feature type="chain" id="PRO_0000079763" description="Cobalt-zinc-cadmium resistance protein CzcN">
    <location>
        <begin position="1"/>
        <end position="216"/>
    </location>
</feature>
<feature type="transmembrane region" description="Helical" evidence="1">
    <location>
        <begin position="27"/>
        <end position="47"/>
    </location>
</feature>
<feature type="transmembrane region" description="Helical" evidence="1">
    <location>
        <begin position="50"/>
        <end position="70"/>
    </location>
</feature>
<feature type="transmembrane region" description="Helical" evidence="1">
    <location>
        <begin position="116"/>
        <end position="136"/>
    </location>
</feature>
<name>CZCN_CUPMC</name>
<gene>
    <name type="primary">czcN</name>
    <name type="ordered locus">Rmet_5984</name>
</gene>
<protein>
    <recommendedName>
        <fullName>Cobalt-zinc-cadmium resistance protein CzcN</fullName>
    </recommendedName>
    <alternativeName>
        <fullName>Cation efflux system protein CzcN</fullName>
    </alternativeName>
</protein>
<sequence length="216" mass="23753">MTDSSISPSHPAGLSRALDNFLTRHRIGVWRVVVTFVLASLLFGHSRWDGTWVSPLLLTLGMLGVSLATVGRLWCALYISGRKNNTLVTSGPYSLCRHPLYVCNLLGILGLGAMTESLAVTAVLALAFALMYPAVIRTEDRFLASAFPEFAEYARRTPAFFPRLSLYRGESTWTVHVSSFQRNIADSVWFLGLSVVVESFDLFHDAGVLRAVVTLA</sequence>
<proteinExistence type="predicted"/>
<organism>
    <name type="scientific">Cupriavidus metallidurans (strain ATCC 43123 / DSM 2839 / NBRC 102507 / CH34)</name>
    <name type="common">Ralstonia metallidurans</name>
    <dbReference type="NCBI Taxonomy" id="266264"/>
    <lineage>
        <taxon>Bacteria</taxon>
        <taxon>Pseudomonadati</taxon>
        <taxon>Pseudomonadota</taxon>
        <taxon>Betaproteobacteria</taxon>
        <taxon>Burkholderiales</taxon>
        <taxon>Burkholderiaceae</taxon>
        <taxon>Cupriavidus</taxon>
    </lineage>
</organism>